<organism>
    <name type="scientific">Arabidopsis thaliana</name>
    <name type="common">Mouse-ear cress</name>
    <dbReference type="NCBI Taxonomy" id="3702"/>
    <lineage>
        <taxon>Eukaryota</taxon>
        <taxon>Viridiplantae</taxon>
        <taxon>Streptophyta</taxon>
        <taxon>Embryophyta</taxon>
        <taxon>Tracheophyta</taxon>
        <taxon>Spermatophyta</taxon>
        <taxon>Magnoliopsida</taxon>
        <taxon>eudicotyledons</taxon>
        <taxon>Gunneridae</taxon>
        <taxon>Pentapetalae</taxon>
        <taxon>rosids</taxon>
        <taxon>malvids</taxon>
        <taxon>Brassicales</taxon>
        <taxon>Brassicaceae</taxon>
        <taxon>Camelineae</taxon>
        <taxon>Arabidopsis</taxon>
    </lineage>
</organism>
<name>Y1045_ARATH</name>
<protein>
    <recommendedName>
        <fullName>B3 domain-containing protein At1g10455</fullName>
    </recommendedName>
</protein>
<proteinExistence type="evidence at transcript level"/>
<dbReference type="EMBL" id="AC007067">
    <property type="protein sequence ID" value="AAD39566.1"/>
    <property type="molecule type" value="Genomic_DNA"/>
</dbReference>
<dbReference type="EMBL" id="CP002684">
    <property type="protein sequence ID" value="AEE28581.1"/>
    <property type="molecule type" value="Genomic_DNA"/>
</dbReference>
<dbReference type="EMBL" id="AB493445">
    <property type="protein sequence ID" value="BAH30283.1"/>
    <property type="molecule type" value="Genomic_DNA"/>
</dbReference>
<dbReference type="RefSeq" id="NP_683297.1">
    <property type="nucleotide sequence ID" value="NM_148456.1"/>
</dbReference>
<dbReference type="SMR" id="Q9XIK5"/>
<dbReference type="STRING" id="3702.Q9XIK5"/>
<dbReference type="PaxDb" id="3702-AT1G10455.1"/>
<dbReference type="ProteomicsDB" id="234616"/>
<dbReference type="EnsemblPlants" id="AT1G10455.1">
    <property type="protein sequence ID" value="AT1G10455.1"/>
    <property type="gene ID" value="AT1G10455"/>
</dbReference>
<dbReference type="GeneID" id="837585"/>
<dbReference type="Gramene" id="AT1G10455.1">
    <property type="protein sequence ID" value="AT1G10455.1"/>
    <property type="gene ID" value="AT1G10455"/>
</dbReference>
<dbReference type="KEGG" id="ath:AT1G10455"/>
<dbReference type="Araport" id="AT1G10455"/>
<dbReference type="TAIR" id="AT1G10455"/>
<dbReference type="HOGENOM" id="CLU_162241_0_0_1"/>
<dbReference type="InParanoid" id="Q9XIK5"/>
<dbReference type="OMA" id="YVEDDPW"/>
<dbReference type="PhylomeDB" id="Q9XIK5"/>
<dbReference type="PRO" id="PR:Q9XIK5"/>
<dbReference type="Proteomes" id="UP000006548">
    <property type="component" value="Chromosome 1"/>
</dbReference>
<dbReference type="ExpressionAtlas" id="Q9XIK5">
    <property type="expression patterns" value="baseline"/>
</dbReference>
<dbReference type="GO" id="GO:0005634">
    <property type="term" value="C:nucleus"/>
    <property type="evidence" value="ECO:0007669"/>
    <property type="project" value="UniProtKB-SubCell"/>
</dbReference>
<dbReference type="GO" id="GO:0003677">
    <property type="term" value="F:DNA binding"/>
    <property type="evidence" value="ECO:0007669"/>
    <property type="project" value="UniProtKB-KW"/>
</dbReference>
<dbReference type="CDD" id="cd10017">
    <property type="entry name" value="B3_DNA"/>
    <property type="match status" value="1"/>
</dbReference>
<dbReference type="Gene3D" id="2.40.330.10">
    <property type="entry name" value="DNA-binding pseudobarrel domain"/>
    <property type="match status" value="1"/>
</dbReference>
<dbReference type="InterPro" id="IPR003340">
    <property type="entry name" value="B3_DNA-bd"/>
</dbReference>
<dbReference type="InterPro" id="IPR051442">
    <property type="entry name" value="B3_domain"/>
</dbReference>
<dbReference type="InterPro" id="IPR015300">
    <property type="entry name" value="DNA-bd_pseudobarrel_sf"/>
</dbReference>
<dbReference type="PANTHER" id="PTHR34269:SF17">
    <property type="entry name" value="B3 DOMAIN PROTEIN"/>
    <property type="match status" value="1"/>
</dbReference>
<dbReference type="PANTHER" id="PTHR34269">
    <property type="entry name" value="TRANSCRIPTION FACTOR B3-DOMAIN FAMILY-RELATED"/>
    <property type="match status" value="1"/>
</dbReference>
<dbReference type="SMART" id="SM01019">
    <property type="entry name" value="B3"/>
    <property type="match status" value="1"/>
</dbReference>
<dbReference type="SUPFAM" id="SSF101936">
    <property type="entry name" value="DNA-binding pseudobarrel domain"/>
    <property type="match status" value="1"/>
</dbReference>
<comment type="subcellular location">
    <subcellularLocation>
        <location evidence="1">Nucleus</location>
    </subcellularLocation>
</comment>
<sequence length="152" mass="17676">MAQNKNLNLELSLSQYVEDDPWVLKKKLSDSDLYYSAQLYLPKQEMEHFVLPEMDHDLVRKLGAGVEVKVRDVDSVDDFYTVRLKVRNGQYYLGKGWGLIKNAKVLNTGDHIGLFWDKLTREVKFKHFKSQSITMHREAGTTSTQKNVLQKK</sequence>
<evidence type="ECO:0000250" key="1"/>
<keyword id="KW-0238">DNA-binding</keyword>
<keyword id="KW-0539">Nucleus</keyword>
<keyword id="KW-1185">Reference proteome</keyword>
<keyword id="KW-0804">Transcription</keyword>
<keyword id="KW-0805">Transcription regulation</keyword>
<accession>Q9XIK5</accession>
<reference key="1">
    <citation type="journal article" date="2000" name="Nature">
        <title>Sequence and analysis of chromosome 1 of the plant Arabidopsis thaliana.</title>
        <authorList>
            <person name="Theologis A."/>
            <person name="Ecker J.R."/>
            <person name="Palm C.J."/>
            <person name="Federspiel N.A."/>
            <person name="Kaul S."/>
            <person name="White O."/>
            <person name="Alonso J."/>
            <person name="Altafi H."/>
            <person name="Araujo R."/>
            <person name="Bowman C.L."/>
            <person name="Brooks S.Y."/>
            <person name="Buehler E."/>
            <person name="Chan A."/>
            <person name="Chao Q."/>
            <person name="Chen H."/>
            <person name="Cheuk R.F."/>
            <person name="Chin C.W."/>
            <person name="Chung M.K."/>
            <person name="Conn L."/>
            <person name="Conway A.B."/>
            <person name="Conway A.R."/>
            <person name="Creasy T.H."/>
            <person name="Dewar K."/>
            <person name="Dunn P."/>
            <person name="Etgu P."/>
            <person name="Feldblyum T.V."/>
            <person name="Feng J.-D."/>
            <person name="Fong B."/>
            <person name="Fujii C.Y."/>
            <person name="Gill J.E."/>
            <person name="Goldsmith A.D."/>
            <person name="Haas B."/>
            <person name="Hansen N.F."/>
            <person name="Hughes B."/>
            <person name="Huizar L."/>
            <person name="Hunter J.L."/>
            <person name="Jenkins J."/>
            <person name="Johnson-Hopson C."/>
            <person name="Khan S."/>
            <person name="Khaykin E."/>
            <person name="Kim C.J."/>
            <person name="Koo H.L."/>
            <person name="Kremenetskaia I."/>
            <person name="Kurtz D.B."/>
            <person name="Kwan A."/>
            <person name="Lam B."/>
            <person name="Langin-Hooper S."/>
            <person name="Lee A."/>
            <person name="Lee J.M."/>
            <person name="Lenz C.A."/>
            <person name="Li J.H."/>
            <person name="Li Y.-P."/>
            <person name="Lin X."/>
            <person name="Liu S.X."/>
            <person name="Liu Z.A."/>
            <person name="Luros J.S."/>
            <person name="Maiti R."/>
            <person name="Marziali A."/>
            <person name="Militscher J."/>
            <person name="Miranda M."/>
            <person name="Nguyen M."/>
            <person name="Nierman W.C."/>
            <person name="Osborne B.I."/>
            <person name="Pai G."/>
            <person name="Peterson J."/>
            <person name="Pham P.K."/>
            <person name="Rizzo M."/>
            <person name="Rooney T."/>
            <person name="Rowley D."/>
            <person name="Sakano H."/>
            <person name="Salzberg S.L."/>
            <person name="Schwartz J.R."/>
            <person name="Shinn P."/>
            <person name="Southwick A.M."/>
            <person name="Sun H."/>
            <person name="Tallon L.J."/>
            <person name="Tambunga G."/>
            <person name="Toriumi M.J."/>
            <person name="Town C.D."/>
            <person name="Utterback T."/>
            <person name="Van Aken S."/>
            <person name="Vaysberg M."/>
            <person name="Vysotskaia V.S."/>
            <person name="Walker M."/>
            <person name="Wu D."/>
            <person name="Yu G."/>
            <person name="Fraser C.M."/>
            <person name="Venter J.C."/>
            <person name="Davis R.W."/>
        </authorList>
    </citation>
    <scope>NUCLEOTIDE SEQUENCE [LARGE SCALE GENOMIC DNA]</scope>
    <source>
        <strain>cv. Columbia</strain>
    </source>
</reference>
<reference key="2">
    <citation type="journal article" date="2017" name="Plant J.">
        <title>Araport11: a complete reannotation of the Arabidopsis thaliana reference genome.</title>
        <authorList>
            <person name="Cheng C.Y."/>
            <person name="Krishnakumar V."/>
            <person name="Chan A.P."/>
            <person name="Thibaud-Nissen F."/>
            <person name="Schobel S."/>
            <person name="Town C.D."/>
        </authorList>
    </citation>
    <scope>GENOME REANNOTATION</scope>
    <source>
        <strain>cv. Columbia</strain>
    </source>
</reference>
<reference key="3">
    <citation type="submission" date="2009-03" db="EMBL/GenBank/DDBJ databases">
        <title>ORF cloning and analysis of Arabidopsis transcription factor genes.</title>
        <authorList>
            <person name="Fujita M."/>
            <person name="Mizukado S."/>
            <person name="Seki M."/>
            <person name="Shinozaki K."/>
            <person name="Mitsuda N."/>
            <person name="Takiguchi Y."/>
            <person name="Takagi M."/>
        </authorList>
    </citation>
    <scope>NUCLEOTIDE SEQUENCE [LARGE SCALE GENOMIC DNA]</scope>
</reference>
<reference key="4">
    <citation type="journal article" date="2008" name="Trends Plant Sci.">
        <title>The plant B3 superfamily.</title>
        <authorList>
            <person name="Swaminathan K."/>
            <person name="Peterson K."/>
            <person name="Jack T."/>
        </authorList>
    </citation>
    <scope>GENE FAMILY</scope>
</reference>
<feature type="chain" id="PRO_0000375121" description="B3 domain-containing protein At1g10455">
    <location>
        <begin position="1"/>
        <end position="152"/>
    </location>
</feature>
<feature type="DNA-binding region" description="TF-B3">
    <location>
        <begin position="24"/>
        <end position="131"/>
    </location>
</feature>
<gene>
    <name type="ordered locus">At1g10455</name>
    <name type="ORF">T10O24.6</name>
</gene>